<comment type="function">
    <text evidence="1">Catalyzes the condensation of ATP and 5-phosphoribose 1-diphosphate to form N'-(5'-phosphoribosyl)-ATP (PR-ATP). Has a crucial role in the pathway because the rate of histidine biosynthesis seems to be controlled primarily by regulation of HisG enzymatic activity (By similarity).</text>
</comment>
<comment type="catalytic activity">
    <reaction>
        <text>1-(5-phospho-beta-D-ribosyl)-ATP + diphosphate = 5-phospho-alpha-D-ribose 1-diphosphate + ATP</text>
        <dbReference type="Rhea" id="RHEA:18473"/>
        <dbReference type="ChEBI" id="CHEBI:30616"/>
        <dbReference type="ChEBI" id="CHEBI:33019"/>
        <dbReference type="ChEBI" id="CHEBI:58017"/>
        <dbReference type="ChEBI" id="CHEBI:73183"/>
        <dbReference type="EC" id="2.4.2.17"/>
    </reaction>
</comment>
<comment type="pathway">
    <text>Amino-acid biosynthesis; L-histidine biosynthesis; L-histidine from 5-phospho-alpha-D-ribose 1-diphosphate: step 1/9.</text>
</comment>
<comment type="subunit">
    <text evidence="1">Heteromultimer composed of HisG and HisZ subunits.</text>
</comment>
<comment type="subcellular location">
    <subcellularLocation>
        <location evidence="1">Cytoplasm</location>
    </subcellularLocation>
</comment>
<comment type="domain">
    <text>Lacks the C-terminal regulatory region which is replaced by HisZ.</text>
</comment>
<comment type="similarity">
    <text evidence="2">Belongs to the ATP phosphoribosyltransferase family. Short subfamily.</text>
</comment>
<keyword id="KW-0028">Amino-acid biosynthesis</keyword>
<keyword id="KW-0067">ATP-binding</keyword>
<keyword id="KW-0963">Cytoplasm</keyword>
<keyword id="KW-0328">Glycosyltransferase</keyword>
<keyword id="KW-0368">Histidine biosynthesis</keyword>
<keyword id="KW-0547">Nucleotide-binding</keyword>
<keyword id="KW-1185">Reference proteome</keyword>
<keyword id="KW-0808">Transferase</keyword>
<dbReference type="EC" id="2.4.2.17"/>
<dbReference type="EMBL" id="BA000004">
    <property type="protein sequence ID" value="BAB07302.1"/>
    <property type="molecule type" value="Genomic_DNA"/>
</dbReference>
<dbReference type="PIR" id="G84097">
    <property type="entry name" value="G84097"/>
</dbReference>
<dbReference type="RefSeq" id="WP_010899711.1">
    <property type="nucleotide sequence ID" value="NC_002570.2"/>
</dbReference>
<dbReference type="SMR" id="Q9K6Z1"/>
<dbReference type="STRING" id="272558.gene:10729496"/>
<dbReference type="GeneID" id="87599112"/>
<dbReference type="KEGG" id="bha:BH3583"/>
<dbReference type="eggNOG" id="COG0040">
    <property type="taxonomic scope" value="Bacteria"/>
</dbReference>
<dbReference type="HOGENOM" id="CLU_038115_2_0_9"/>
<dbReference type="OrthoDB" id="9801867at2"/>
<dbReference type="UniPathway" id="UPA00031">
    <property type="reaction ID" value="UER00006"/>
</dbReference>
<dbReference type="Proteomes" id="UP000001258">
    <property type="component" value="Chromosome"/>
</dbReference>
<dbReference type="GO" id="GO:0005737">
    <property type="term" value="C:cytoplasm"/>
    <property type="evidence" value="ECO:0007669"/>
    <property type="project" value="UniProtKB-SubCell"/>
</dbReference>
<dbReference type="GO" id="GO:0005524">
    <property type="term" value="F:ATP binding"/>
    <property type="evidence" value="ECO:0007669"/>
    <property type="project" value="UniProtKB-KW"/>
</dbReference>
<dbReference type="GO" id="GO:0003879">
    <property type="term" value="F:ATP phosphoribosyltransferase activity"/>
    <property type="evidence" value="ECO:0007669"/>
    <property type="project" value="UniProtKB-UniRule"/>
</dbReference>
<dbReference type="GO" id="GO:0000105">
    <property type="term" value="P:L-histidine biosynthetic process"/>
    <property type="evidence" value="ECO:0007669"/>
    <property type="project" value="UniProtKB-UniRule"/>
</dbReference>
<dbReference type="CDD" id="cd13595">
    <property type="entry name" value="PBP2_HisGs"/>
    <property type="match status" value="1"/>
</dbReference>
<dbReference type="FunFam" id="3.40.190.10:FF:000008">
    <property type="entry name" value="ATP phosphoribosyltransferase"/>
    <property type="match status" value="1"/>
</dbReference>
<dbReference type="FunFam" id="3.40.190.10:FF:000011">
    <property type="entry name" value="ATP phosphoribosyltransferase"/>
    <property type="match status" value="1"/>
</dbReference>
<dbReference type="Gene3D" id="3.40.190.10">
    <property type="entry name" value="Periplasmic binding protein-like II"/>
    <property type="match status" value="2"/>
</dbReference>
<dbReference type="HAMAP" id="MF_01018">
    <property type="entry name" value="HisG_Short"/>
    <property type="match status" value="1"/>
</dbReference>
<dbReference type="InterPro" id="IPR013820">
    <property type="entry name" value="ATP_PRibTrfase_cat"/>
</dbReference>
<dbReference type="InterPro" id="IPR018198">
    <property type="entry name" value="ATP_PRibTrfase_CS"/>
</dbReference>
<dbReference type="InterPro" id="IPR001348">
    <property type="entry name" value="ATP_PRibTrfase_HisG"/>
</dbReference>
<dbReference type="InterPro" id="IPR024893">
    <property type="entry name" value="ATP_PRibTrfase_HisG_short"/>
</dbReference>
<dbReference type="NCBIfam" id="TIGR00070">
    <property type="entry name" value="hisG"/>
    <property type="match status" value="1"/>
</dbReference>
<dbReference type="PANTHER" id="PTHR21403:SF8">
    <property type="entry name" value="ATP PHOSPHORIBOSYLTRANSFERASE"/>
    <property type="match status" value="1"/>
</dbReference>
<dbReference type="PANTHER" id="PTHR21403">
    <property type="entry name" value="ATP PHOSPHORIBOSYLTRANSFERASE ATP-PRTASE"/>
    <property type="match status" value="1"/>
</dbReference>
<dbReference type="Pfam" id="PF01634">
    <property type="entry name" value="HisG"/>
    <property type="match status" value="1"/>
</dbReference>
<dbReference type="SUPFAM" id="SSF53850">
    <property type="entry name" value="Periplasmic binding protein-like II"/>
    <property type="match status" value="1"/>
</dbReference>
<dbReference type="PROSITE" id="PS01316">
    <property type="entry name" value="ATP_P_PHORIBOSYLTR"/>
    <property type="match status" value="1"/>
</dbReference>
<evidence type="ECO:0000250" key="1"/>
<evidence type="ECO:0000305" key="2"/>
<accession>Q9K6Z1</accession>
<name>HIS1_HALH5</name>
<feature type="chain" id="PRO_0000151897" description="ATP phosphoribosyltransferase">
    <location>
        <begin position="1"/>
        <end position="212"/>
    </location>
</feature>
<sequence>MSMLTVAMPKGRIFDEAVGLLRKAGYNLPAEFEASRKLIVDVPEENMRFILAKPMDVPTYVEHGVADVGVAGKDVMLEEERDVYEVLDLKISECYLAVAGLPNYEKKHDLNPKVASKYPHLATRYFKEQGEQVEIIKLNGSIELAPLIGLADRIVDIVSTGRTLRENGLVELEKMMTITSRLIVNPVSYRMKDERIDEMVERLLQVVEGDGA</sequence>
<gene>
    <name type="primary">hisG</name>
    <name type="ordered locus">BH3583</name>
</gene>
<proteinExistence type="inferred from homology"/>
<organism>
    <name type="scientific">Halalkalibacterium halodurans (strain ATCC BAA-125 / DSM 18197 / FERM 7344 / JCM 9153 / C-125)</name>
    <name type="common">Bacillus halodurans</name>
    <dbReference type="NCBI Taxonomy" id="272558"/>
    <lineage>
        <taxon>Bacteria</taxon>
        <taxon>Bacillati</taxon>
        <taxon>Bacillota</taxon>
        <taxon>Bacilli</taxon>
        <taxon>Bacillales</taxon>
        <taxon>Bacillaceae</taxon>
        <taxon>Halalkalibacterium (ex Joshi et al. 2022)</taxon>
    </lineage>
</organism>
<reference key="1">
    <citation type="journal article" date="2000" name="Nucleic Acids Res.">
        <title>Complete genome sequence of the alkaliphilic bacterium Bacillus halodurans and genomic sequence comparison with Bacillus subtilis.</title>
        <authorList>
            <person name="Takami H."/>
            <person name="Nakasone K."/>
            <person name="Takaki Y."/>
            <person name="Maeno G."/>
            <person name="Sasaki R."/>
            <person name="Masui N."/>
            <person name="Fuji F."/>
            <person name="Hirama C."/>
            <person name="Nakamura Y."/>
            <person name="Ogasawara N."/>
            <person name="Kuhara S."/>
            <person name="Horikoshi K."/>
        </authorList>
    </citation>
    <scope>NUCLEOTIDE SEQUENCE [LARGE SCALE GENOMIC DNA]</scope>
    <source>
        <strain>ATCC BAA-125 / DSM 18197 / FERM 7344 / JCM 9153 / C-125</strain>
    </source>
</reference>
<protein>
    <recommendedName>
        <fullName>ATP phosphoribosyltransferase</fullName>
        <shortName>ATP-PRT</shortName>
        <shortName>ATP-PRTase</shortName>
        <ecNumber>2.4.2.17</ecNumber>
    </recommendedName>
</protein>